<reference key="1">
    <citation type="journal article" date="2002" name="J. Bacteriol.">
        <title>Whole-genome comparison of Mycobacterium tuberculosis clinical and laboratory strains.</title>
        <authorList>
            <person name="Fleischmann R.D."/>
            <person name="Alland D."/>
            <person name="Eisen J.A."/>
            <person name="Carpenter L."/>
            <person name="White O."/>
            <person name="Peterson J.D."/>
            <person name="DeBoy R.T."/>
            <person name="Dodson R.J."/>
            <person name="Gwinn M.L."/>
            <person name="Haft D.H."/>
            <person name="Hickey E.K."/>
            <person name="Kolonay J.F."/>
            <person name="Nelson W.C."/>
            <person name="Umayam L.A."/>
            <person name="Ermolaeva M.D."/>
            <person name="Salzberg S.L."/>
            <person name="Delcher A."/>
            <person name="Utterback T.R."/>
            <person name="Weidman J.F."/>
            <person name="Khouri H.M."/>
            <person name="Gill J."/>
            <person name="Mikula A."/>
            <person name="Bishai W."/>
            <person name="Jacobs W.R. Jr."/>
            <person name="Venter J.C."/>
            <person name="Fraser C.M."/>
        </authorList>
    </citation>
    <scope>NUCLEOTIDE SEQUENCE [LARGE SCALE GENOMIC DNA]</scope>
    <source>
        <strain>CDC 1551 / Oshkosh</strain>
    </source>
</reference>
<sequence length="362" mass="38078">MLRLVVGALLLVLAFAGGYAVAACKTVTLTVDGTAMRVTTMKSRVIDIVEENGFSVDDRDDLYPAAGVQVHDADTIVLRRSRPLQISLDGHDAKQVWTTASTVDEALAQLAMTDTAPAAASRASRVPLSGMALPVVSAKTVQLNDGGLVRTVHLPAPNVAGLLSAAGVPLLQSDHVVPAATAPIVEGMQIQVTRNRIKKVTERLPLPPNARRVEDPEMNMSREVVEDPGVPGTQDVTFAVAEVNGVETGRLPVANVVVTPAHEAVVRVGTKPGTEVPPVIDGSIWDAIAGCEAGGNWAINTGNGYYGGVQFDQGTWEANGGLRYAPRADLATREEQIAVAEVTRLRQGWGAWPVCAARAGAR</sequence>
<organism>
    <name type="scientific">Mycobacterium tuberculosis (strain CDC 1551 / Oshkosh)</name>
    <dbReference type="NCBI Taxonomy" id="83331"/>
    <lineage>
        <taxon>Bacteria</taxon>
        <taxon>Bacillati</taxon>
        <taxon>Actinomycetota</taxon>
        <taxon>Actinomycetes</taxon>
        <taxon>Mycobacteriales</taxon>
        <taxon>Mycobacteriaceae</taxon>
        <taxon>Mycobacterium</taxon>
        <taxon>Mycobacterium tuberculosis complex</taxon>
    </lineage>
</organism>
<evidence type="ECO:0000250" key="1"/>
<evidence type="ECO:0000255" key="2">
    <source>
        <dbReference type="PROSITE-ProRule" id="PRU00303"/>
    </source>
</evidence>
<evidence type="ECO:0000255" key="3">
    <source>
        <dbReference type="PROSITE-ProRule" id="PRU00437"/>
    </source>
</evidence>
<evidence type="ECO:0000305" key="4"/>
<keyword id="KW-1003">Cell membrane</keyword>
<keyword id="KW-1015">Disulfide bond</keyword>
<keyword id="KW-0378">Hydrolase</keyword>
<keyword id="KW-0449">Lipoprotein</keyword>
<keyword id="KW-0472">Membrane</keyword>
<keyword id="KW-0564">Palmitate</keyword>
<keyword id="KW-1185">Reference proteome</keyword>
<keyword id="KW-0732">Signal</keyword>
<keyword id="KW-0843">Virulence</keyword>
<proteinExistence type="inferred from homology"/>
<gene>
    <name type="primary">rpfB</name>
    <name type="ordered locus">MT1038</name>
</gene>
<comment type="function">
    <text evidence="1">Factor that stimulates resuscitation of dormant cells. Has peptidoglycan (PG) hydrolytic activity. PG fragments could either directly activate the resuscitation pathway of dormant bacteria or serve as a substrate for endogenous Rpf, resulting in low molecular weight products with resuscitation activity (By similarity).</text>
</comment>
<comment type="subunit">
    <text evidence="1">Monomer.</text>
</comment>
<comment type="subcellular location">
    <subcellularLocation>
        <location evidence="2">Cell membrane</location>
        <topology evidence="2">Lipid-anchor</topology>
    </subcellularLocation>
</comment>
<comment type="similarity">
    <text evidence="4">Belongs to the transglycosylase family. Rpf subfamily.</text>
</comment>
<accession>P9WG28</accession>
<accession>F2GHD1</accession>
<accession>L0T719</accession>
<accession>O05594</accession>
<accession>Q7D900</accession>
<dbReference type="EC" id="3.-.-.-"/>
<dbReference type="EMBL" id="AE000516">
    <property type="protein sequence ID" value="AAK45288.1"/>
    <property type="molecule type" value="Genomic_DNA"/>
</dbReference>
<dbReference type="PIR" id="D70603">
    <property type="entry name" value="D70603"/>
</dbReference>
<dbReference type="SMR" id="P9WG28"/>
<dbReference type="CAZy" id="GH23">
    <property type="family name" value="Glycoside Hydrolase Family 23"/>
</dbReference>
<dbReference type="KEGG" id="mtc:MT1038"/>
<dbReference type="PATRIC" id="fig|83331.31.peg.1113"/>
<dbReference type="HOGENOM" id="CLU_036884_1_0_11"/>
<dbReference type="Proteomes" id="UP000001020">
    <property type="component" value="Chromosome"/>
</dbReference>
<dbReference type="GO" id="GO:0005576">
    <property type="term" value="C:extracellular region"/>
    <property type="evidence" value="ECO:0007669"/>
    <property type="project" value="UniProtKB-ARBA"/>
</dbReference>
<dbReference type="GO" id="GO:0005886">
    <property type="term" value="C:plasma membrane"/>
    <property type="evidence" value="ECO:0007669"/>
    <property type="project" value="UniProtKB-SubCell"/>
</dbReference>
<dbReference type="GO" id="GO:0016787">
    <property type="term" value="F:hydrolase activity"/>
    <property type="evidence" value="ECO:0007669"/>
    <property type="project" value="UniProtKB-KW"/>
</dbReference>
<dbReference type="GO" id="GO:0010629">
    <property type="term" value="P:negative regulation of gene expression"/>
    <property type="evidence" value="ECO:0007669"/>
    <property type="project" value="UniProtKB-ARBA"/>
</dbReference>
<dbReference type="GO" id="GO:0009372">
    <property type="term" value="P:quorum sensing"/>
    <property type="evidence" value="ECO:0007669"/>
    <property type="project" value="UniProtKB-ARBA"/>
</dbReference>
<dbReference type="GO" id="GO:0042127">
    <property type="term" value="P:regulation of cell population proliferation"/>
    <property type="evidence" value="ECO:0007669"/>
    <property type="project" value="UniProtKB-ARBA"/>
</dbReference>
<dbReference type="CDD" id="cd13925">
    <property type="entry name" value="RPF"/>
    <property type="match status" value="1"/>
</dbReference>
<dbReference type="FunFam" id="1.10.530.10:FF:000015">
    <property type="entry name" value="Resuscitation-promoting factor RpfB"/>
    <property type="match status" value="1"/>
</dbReference>
<dbReference type="FunFam" id="2.20.230.10:FF:000003">
    <property type="entry name" value="Resuscitation-promoting factor RpfB"/>
    <property type="match status" value="1"/>
</dbReference>
<dbReference type="Gene3D" id="1.10.530.10">
    <property type="match status" value="1"/>
</dbReference>
<dbReference type="Gene3D" id="2.20.230.10">
    <property type="entry name" value="Resuscitation-promoting factor rpfb"/>
    <property type="match status" value="1"/>
</dbReference>
<dbReference type="InterPro" id="IPR007137">
    <property type="entry name" value="DUF348"/>
</dbReference>
<dbReference type="InterPro" id="IPR011098">
    <property type="entry name" value="G5_dom"/>
</dbReference>
<dbReference type="InterPro" id="IPR023346">
    <property type="entry name" value="Lysozyme-like_dom_sf"/>
</dbReference>
<dbReference type="InterPro" id="IPR051933">
    <property type="entry name" value="Resuscitation_pf_RpfB"/>
</dbReference>
<dbReference type="InterPro" id="IPR010618">
    <property type="entry name" value="RPF"/>
</dbReference>
<dbReference type="PANTHER" id="PTHR39160">
    <property type="entry name" value="CELL WALL-BINDING PROTEIN YOCH"/>
    <property type="match status" value="1"/>
</dbReference>
<dbReference type="PANTHER" id="PTHR39160:SF4">
    <property type="entry name" value="RESUSCITATION-PROMOTING FACTOR RPFB"/>
    <property type="match status" value="1"/>
</dbReference>
<dbReference type="Pfam" id="PF03990">
    <property type="entry name" value="DUF348"/>
    <property type="match status" value="3"/>
</dbReference>
<dbReference type="Pfam" id="PF07501">
    <property type="entry name" value="G5"/>
    <property type="match status" value="1"/>
</dbReference>
<dbReference type="Pfam" id="PF06737">
    <property type="entry name" value="Transglycosylas"/>
    <property type="match status" value="1"/>
</dbReference>
<dbReference type="SMART" id="SM01208">
    <property type="entry name" value="G5"/>
    <property type="match status" value="1"/>
</dbReference>
<dbReference type="SUPFAM" id="SSF53955">
    <property type="entry name" value="Lysozyme-like"/>
    <property type="match status" value="1"/>
</dbReference>
<dbReference type="PROSITE" id="PS51109">
    <property type="entry name" value="G5"/>
    <property type="match status" value="1"/>
</dbReference>
<dbReference type="PROSITE" id="PS51257">
    <property type="entry name" value="PROKAR_LIPOPROTEIN"/>
    <property type="match status" value="1"/>
</dbReference>
<protein>
    <recommendedName>
        <fullName>Resuscitation-promoting factor RpfB</fullName>
        <ecNumber>3.-.-.-</ecNumber>
    </recommendedName>
</protein>
<name>RPFB_MYCTO</name>
<feature type="signal peptide" evidence="2">
    <location>
        <begin position="1"/>
        <end position="23"/>
    </location>
</feature>
<feature type="chain" id="PRO_0000428434" description="Resuscitation-promoting factor RpfB">
    <location>
        <begin position="24"/>
        <end position="362"/>
    </location>
</feature>
<feature type="domain" description="G5" evidence="3">
    <location>
        <begin position="192"/>
        <end position="272"/>
    </location>
</feature>
<feature type="lipid moiety-binding region" description="N-palmitoyl cysteine" evidence="2">
    <location>
        <position position="24"/>
    </location>
</feature>
<feature type="lipid moiety-binding region" description="S-diacylglycerol cysteine" evidence="2">
    <location>
        <position position="24"/>
    </location>
</feature>
<feature type="disulfide bond" evidence="1">
    <location>
        <begin position="291"/>
        <end position="355"/>
    </location>
</feature>